<accession>B1KSM5</accession>
<organism>
    <name type="scientific">Clostridium botulinum (strain Loch Maree / Type A3)</name>
    <dbReference type="NCBI Taxonomy" id="498214"/>
    <lineage>
        <taxon>Bacteria</taxon>
        <taxon>Bacillati</taxon>
        <taxon>Bacillota</taxon>
        <taxon>Clostridia</taxon>
        <taxon>Eubacteriales</taxon>
        <taxon>Clostridiaceae</taxon>
        <taxon>Clostridium</taxon>
    </lineage>
</organism>
<dbReference type="EMBL" id="CP000962">
    <property type="protein sequence ID" value="ACA54023.1"/>
    <property type="molecule type" value="Genomic_DNA"/>
</dbReference>
<dbReference type="RefSeq" id="WP_003357650.1">
    <property type="nucleotide sequence ID" value="NC_010520.1"/>
</dbReference>
<dbReference type="SMR" id="B1KSM5"/>
<dbReference type="KEGG" id="cbl:CLK_2924"/>
<dbReference type="HOGENOM" id="CLU_044142_4_1_9"/>
<dbReference type="GO" id="GO:0022625">
    <property type="term" value="C:cytosolic large ribosomal subunit"/>
    <property type="evidence" value="ECO:0007669"/>
    <property type="project" value="TreeGrafter"/>
</dbReference>
<dbReference type="GO" id="GO:0019843">
    <property type="term" value="F:rRNA binding"/>
    <property type="evidence" value="ECO:0007669"/>
    <property type="project" value="UniProtKB-UniRule"/>
</dbReference>
<dbReference type="GO" id="GO:0003735">
    <property type="term" value="F:structural constituent of ribosome"/>
    <property type="evidence" value="ECO:0007669"/>
    <property type="project" value="InterPro"/>
</dbReference>
<dbReference type="GO" id="GO:0006412">
    <property type="term" value="P:translation"/>
    <property type="evidence" value="ECO:0007669"/>
    <property type="project" value="UniProtKB-UniRule"/>
</dbReference>
<dbReference type="FunFam" id="2.40.30.10:FF:000004">
    <property type="entry name" value="50S ribosomal protein L3"/>
    <property type="match status" value="1"/>
</dbReference>
<dbReference type="FunFam" id="3.30.160.810:FF:000001">
    <property type="entry name" value="50S ribosomal protein L3"/>
    <property type="match status" value="1"/>
</dbReference>
<dbReference type="Gene3D" id="3.30.160.810">
    <property type="match status" value="1"/>
</dbReference>
<dbReference type="Gene3D" id="2.40.30.10">
    <property type="entry name" value="Translation factors"/>
    <property type="match status" value="1"/>
</dbReference>
<dbReference type="HAMAP" id="MF_01325_B">
    <property type="entry name" value="Ribosomal_uL3_B"/>
    <property type="match status" value="1"/>
</dbReference>
<dbReference type="InterPro" id="IPR000597">
    <property type="entry name" value="Ribosomal_uL3"/>
</dbReference>
<dbReference type="InterPro" id="IPR019927">
    <property type="entry name" value="Ribosomal_uL3_bac/org-type"/>
</dbReference>
<dbReference type="InterPro" id="IPR019926">
    <property type="entry name" value="Ribosomal_uL3_CS"/>
</dbReference>
<dbReference type="InterPro" id="IPR009000">
    <property type="entry name" value="Transl_B-barrel_sf"/>
</dbReference>
<dbReference type="NCBIfam" id="TIGR03625">
    <property type="entry name" value="L3_bact"/>
    <property type="match status" value="1"/>
</dbReference>
<dbReference type="PANTHER" id="PTHR11229">
    <property type="entry name" value="50S RIBOSOMAL PROTEIN L3"/>
    <property type="match status" value="1"/>
</dbReference>
<dbReference type="PANTHER" id="PTHR11229:SF16">
    <property type="entry name" value="LARGE RIBOSOMAL SUBUNIT PROTEIN UL3C"/>
    <property type="match status" value="1"/>
</dbReference>
<dbReference type="Pfam" id="PF00297">
    <property type="entry name" value="Ribosomal_L3"/>
    <property type="match status" value="1"/>
</dbReference>
<dbReference type="SUPFAM" id="SSF50447">
    <property type="entry name" value="Translation proteins"/>
    <property type="match status" value="1"/>
</dbReference>
<dbReference type="PROSITE" id="PS00474">
    <property type="entry name" value="RIBOSOMAL_L3"/>
    <property type="match status" value="1"/>
</dbReference>
<evidence type="ECO:0000255" key="1">
    <source>
        <dbReference type="HAMAP-Rule" id="MF_01325"/>
    </source>
</evidence>
<evidence type="ECO:0000256" key="2">
    <source>
        <dbReference type="SAM" id="MobiDB-lite"/>
    </source>
</evidence>
<evidence type="ECO:0000305" key="3"/>
<comment type="function">
    <text evidence="1">One of the primary rRNA binding proteins, it binds directly near the 3'-end of the 23S rRNA, where it nucleates assembly of the 50S subunit.</text>
</comment>
<comment type="subunit">
    <text evidence="1">Part of the 50S ribosomal subunit. Forms a cluster with proteins L14 and L19.</text>
</comment>
<comment type="similarity">
    <text evidence="1">Belongs to the universal ribosomal protein uL3 family.</text>
</comment>
<feature type="chain" id="PRO_1000141847" description="Large ribosomal subunit protein uL3">
    <location>
        <begin position="1"/>
        <end position="209"/>
    </location>
</feature>
<feature type="region of interest" description="Disordered" evidence="2">
    <location>
        <begin position="141"/>
        <end position="163"/>
    </location>
</feature>
<reference key="1">
    <citation type="journal article" date="2007" name="PLoS ONE">
        <title>Analysis of the neurotoxin complex genes in Clostridium botulinum A1-A4 and B1 strains: BoNT/A3, /Ba4 and /B1 clusters are located within plasmids.</title>
        <authorList>
            <person name="Smith T.J."/>
            <person name="Hill K.K."/>
            <person name="Foley B.T."/>
            <person name="Detter J.C."/>
            <person name="Munk A.C."/>
            <person name="Bruce D.C."/>
            <person name="Doggett N.A."/>
            <person name="Smith L.A."/>
            <person name="Marks J.D."/>
            <person name="Xie G."/>
            <person name="Brettin T.S."/>
        </authorList>
    </citation>
    <scope>NUCLEOTIDE SEQUENCE [LARGE SCALE GENOMIC DNA]</scope>
    <source>
        <strain>Loch Maree / Type A3</strain>
    </source>
</reference>
<keyword id="KW-0687">Ribonucleoprotein</keyword>
<keyword id="KW-0689">Ribosomal protein</keyword>
<keyword id="KW-0694">RNA-binding</keyword>
<keyword id="KW-0699">rRNA-binding</keyword>
<proteinExistence type="inferred from homology"/>
<name>RL3_CLOBM</name>
<protein>
    <recommendedName>
        <fullName evidence="1">Large ribosomal subunit protein uL3</fullName>
    </recommendedName>
    <alternativeName>
        <fullName evidence="3">50S ribosomal protein L3</fullName>
    </alternativeName>
</protein>
<gene>
    <name evidence="1" type="primary">rplC</name>
    <name type="ordered locus">CLK_2924</name>
</gene>
<sequence>MKKAILGKKLGMTQIFNENGKVIPVTVIEAGPCTVIQKKTVEKDGYEAIQVAFGDIREKLRNKPVKGHFAKAGVSVKRHIKEFKLEDSNSLEIGQEIKADVFEAGERVDISGVSKGKGFQGTIRRWNAHRGPMSHGSKFHRAVGSMGASSDPSRTFKNKRMPGHMGNVNTTVLNLEVVRIIPEKNLILIKGGVPGPNKGLVQIRNTVKA</sequence>